<accession>B0T207</accession>
<name>PHS_CAUSK</name>
<feature type="chain" id="PRO_1000080606" description="Putative pterin-4-alpha-carbinolamine dehydratase">
    <location>
        <begin position="1"/>
        <end position="96"/>
    </location>
</feature>
<sequence length="96" mass="10509">MSRPAKIGATAALSQLQGWAVVSEKDAIGKTYLFADFNAAFGFMTRVALMADKLDHHPEWFNVYNRVEVVLTTHDADGVSDLDVTMARFMDGIATA</sequence>
<reference key="1">
    <citation type="submission" date="2008-01" db="EMBL/GenBank/DDBJ databases">
        <title>Complete sequence of chromosome of Caulobacter sp. K31.</title>
        <authorList>
            <consortium name="US DOE Joint Genome Institute"/>
            <person name="Copeland A."/>
            <person name="Lucas S."/>
            <person name="Lapidus A."/>
            <person name="Barry K."/>
            <person name="Glavina del Rio T."/>
            <person name="Dalin E."/>
            <person name="Tice H."/>
            <person name="Pitluck S."/>
            <person name="Bruce D."/>
            <person name="Goodwin L."/>
            <person name="Thompson L.S."/>
            <person name="Brettin T."/>
            <person name="Detter J.C."/>
            <person name="Han C."/>
            <person name="Schmutz J."/>
            <person name="Larimer F."/>
            <person name="Land M."/>
            <person name="Hauser L."/>
            <person name="Kyrpides N."/>
            <person name="Kim E."/>
            <person name="Stephens C."/>
            <person name="Richardson P."/>
        </authorList>
    </citation>
    <scope>NUCLEOTIDE SEQUENCE [LARGE SCALE GENOMIC DNA]</scope>
    <source>
        <strain>K31</strain>
    </source>
</reference>
<comment type="catalytic activity">
    <reaction evidence="1">
        <text>(4aS,6R)-4a-hydroxy-L-erythro-5,6,7,8-tetrahydrobiopterin = (6R)-L-erythro-6,7-dihydrobiopterin + H2O</text>
        <dbReference type="Rhea" id="RHEA:11920"/>
        <dbReference type="ChEBI" id="CHEBI:15377"/>
        <dbReference type="ChEBI" id="CHEBI:15642"/>
        <dbReference type="ChEBI" id="CHEBI:43120"/>
        <dbReference type="EC" id="4.2.1.96"/>
    </reaction>
</comment>
<comment type="similarity">
    <text evidence="1">Belongs to the pterin-4-alpha-carbinolamine dehydratase family.</text>
</comment>
<proteinExistence type="inferred from homology"/>
<evidence type="ECO:0000255" key="1">
    <source>
        <dbReference type="HAMAP-Rule" id="MF_00434"/>
    </source>
</evidence>
<protein>
    <recommendedName>
        <fullName evidence="1">Putative pterin-4-alpha-carbinolamine dehydratase</fullName>
        <shortName evidence="1">PHS</shortName>
        <ecNumber evidence="1">4.2.1.96</ecNumber>
    </recommendedName>
    <alternativeName>
        <fullName evidence="1">4-alpha-hydroxy-tetrahydropterin dehydratase</fullName>
    </alternativeName>
    <alternativeName>
        <fullName evidence="1">Pterin carbinolamine dehydratase</fullName>
        <shortName evidence="1">PCD</shortName>
    </alternativeName>
</protein>
<dbReference type="EC" id="4.2.1.96" evidence="1"/>
<dbReference type="EMBL" id="CP000927">
    <property type="protein sequence ID" value="ABZ73768.1"/>
    <property type="molecule type" value="Genomic_DNA"/>
</dbReference>
<dbReference type="SMR" id="B0T207"/>
<dbReference type="STRING" id="366602.Caul_4648"/>
<dbReference type="KEGG" id="cak:Caul_4648"/>
<dbReference type="eggNOG" id="COG2154">
    <property type="taxonomic scope" value="Bacteria"/>
</dbReference>
<dbReference type="HOGENOM" id="CLU_081974_3_2_5"/>
<dbReference type="OrthoDB" id="9794987at2"/>
<dbReference type="GO" id="GO:0008124">
    <property type="term" value="F:4-alpha-hydroxytetrahydrobiopterin dehydratase activity"/>
    <property type="evidence" value="ECO:0007669"/>
    <property type="project" value="UniProtKB-UniRule"/>
</dbReference>
<dbReference type="GO" id="GO:0006729">
    <property type="term" value="P:tetrahydrobiopterin biosynthetic process"/>
    <property type="evidence" value="ECO:0007669"/>
    <property type="project" value="InterPro"/>
</dbReference>
<dbReference type="CDD" id="cd00914">
    <property type="entry name" value="PCD_DCoH_subfamily_b"/>
    <property type="match status" value="1"/>
</dbReference>
<dbReference type="Gene3D" id="3.30.1360.20">
    <property type="entry name" value="Transcriptional coactivator/pterin dehydratase"/>
    <property type="match status" value="1"/>
</dbReference>
<dbReference type="HAMAP" id="MF_00434">
    <property type="entry name" value="Pterin_4_alpha"/>
    <property type="match status" value="1"/>
</dbReference>
<dbReference type="InterPro" id="IPR036428">
    <property type="entry name" value="PCD_sf"/>
</dbReference>
<dbReference type="InterPro" id="IPR001533">
    <property type="entry name" value="Pterin_deHydtase"/>
</dbReference>
<dbReference type="NCBIfam" id="NF002018">
    <property type="entry name" value="PRK00823.1-3"/>
    <property type="match status" value="1"/>
</dbReference>
<dbReference type="NCBIfam" id="NF002020">
    <property type="entry name" value="PRK00823.1-5"/>
    <property type="match status" value="1"/>
</dbReference>
<dbReference type="PANTHER" id="PTHR12599">
    <property type="entry name" value="PTERIN-4-ALPHA-CARBINOLAMINE DEHYDRATASE"/>
    <property type="match status" value="1"/>
</dbReference>
<dbReference type="PANTHER" id="PTHR12599:SF0">
    <property type="entry name" value="PTERIN-4-ALPHA-CARBINOLAMINE DEHYDRATASE"/>
    <property type="match status" value="1"/>
</dbReference>
<dbReference type="Pfam" id="PF01329">
    <property type="entry name" value="Pterin_4a"/>
    <property type="match status" value="1"/>
</dbReference>
<dbReference type="SUPFAM" id="SSF55248">
    <property type="entry name" value="PCD-like"/>
    <property type="match status" value="1"/>
</dbReference>
<organism>
    <name type="scientific">Caulobacter sp. (strain K31)</name>
    <dbReference type="NCBI Taxonomy" id="366602"/>
    <lineage>
        <taxon>Bacteria</taxon>
        <taxon>Pseudomonadati</taxon>
        <taxon>Pseudomonadota</taxon>
        <taxon>Alphaproteobacteria</taxon>
        <taxon>Caulobacterales</taxon>
        <taxon>Caulobacteraceae</taxon>
        <taxon>Caulobacter</taxon>
    </lineage>
</organism>
<gene>
    <name type="ordered locus">Caul_4648</name>
</gene>
<keyword id="KW-0456">Lyase</keyword>